<evidence type="ECO:0000256" key="1">
    <source>
        <dbReference type="SAM" id="MobiDB-lite"/>
    </source>
</evidence>
<evidence type="ECO:0000269" key="2">
    <source>
    </source>
</evidence>
<feature type="chain" id="PRO_0000341357" description="Leukemia NUP98 fusion partner 1">
    <location>
        <begin position="1"/>
        <end position="178"/>
    </location>
</feature>
<feature type="region of interest" description="Disordered" evidence="1">
    <location>
        <begin position="28"/>
        <end position="55"/>
    </location>
</feature>
<feature type="region of interest" description="Disordered" evidence="1">
    <location>
        <begin position="89"/>
        <end position="108"/>
    </location>
</feature>
<feature type="region of interest" description="Disordered" evidence="1">
    <location>
        <begin position="147"/>
        <end position="178"/>
    </location>
</feature>
<feature type="compositionally biased region" description="Basic residues" evidence="1">
    <location>
        <begin position="34"/>
        <end position="47"/>
    </location>
</feature>
<feature type="compositionally biased region" description="Basic and acidic residues" evidence="1">
    <location>
        <begin position="147"/>
        <end position="167"/>
    </location>
</feature>
<name>LNP1_HUMAN</name>
<comment type="disease">
    <text evidence="2">A chromosomal aberration involving LNP1 is found in a form of T-cell acute lymphoblastic leukemia (T-ALL). Translocation t(3;11)(q12.2;p15.4) with NUP98.</text>
</comment>
<sequence>MEHKDDDDDDVSFAKWMSSFWGHSWREEDQRGLRERHRLQATSHRKTSLPCPLPVLPRIPSSDCHPRRHSHEDQEFRCRSHVRDYRKYSEDGSFKEPLESKGRSHSKIEKFSESFERQLCFRTKRSASLGPESRKERNERECLRMEIKSRKKVEEERSSRKEEHGEAHMAPLFEKGPE</sequence>
<organism>
    <name type="scientific">Homo sapiens</name>
    <name type="common">Human</name>
    <dbReference type="NCBI Taxonomy" id="9606"/>
    <lineage>
        <taxon>Eukaryota</taxon>
        <taxon>Metazoa</taxon>
        <taxon>Chordata</taxon>
        <taxon>Craniata</taxon>
        <taxon>Vertebrata</taxon>
        <taxon>Euteleostomi</taxon>
        <taxon>Mammalia</taxon>
        <taxon>Eutheria</taxon>
        <taxon>Euarchontoglires</taxon>
        <taxon>Primates</taxon>
        <taxon>Haplorrhini</taxon>
        <taxon>Catarrhini</taxon>
        <taxon>Hominidae</taxon>
        <taxon>Homo</taxon>
    </lineage>
</organism>
<dbReference type="EMBL" id="BC126362">
    <property type="protein sequence ID" value="AAI26363.1"/>
    <property type="molecule type" value="mRNA"/>
</dbReference>
<dbReference type="EMBL" id="BC130480">
    <property type="protein sequence ID" value="AAI30481.1"/>
    <property type="molecule type" value="mRNA"/>
</dbReference>
<dbReference type="EMBL" id="BC144031">
    <property type="protein sequence ID" value="AAI44032.1"/>
    <property type="molecule type" value="mRNA"/>
</dbReference>
<dbReference type="CCDS" id="CCDS43120.1"/>
<dbReference type="RefSeq" id="NP_001078920.1">
    <property type="nucleotide sequence ID" value="NM_001085451.2"/>
</dbReference>
<dbReference type="RefSeq" id="XP_054202416.1">
    <property type="nucleotide sequence ID" value="XM_054346441.1"/>
</dbReference>
<dbReference type="BioGRID" id="131532">
    <property type="interactions" value="26"/>
</dbReference>
<dbReference type="FunCoup" id="A1A4G5">
    <property type="interactions" value="21"/>
</dbReference>
<dbReference type="IntAct" id="A1A4G5">
    <property type="interactions" value="15"/>
</dbReference>
<dbReference type="STRING" id="9606.ENSP00000373191"/>
<dbReference type="iPTMnet" id="A1A4G5"/>
<dbReference type="PhosphoSitePlus" id="A1A4G5"/>
<dbReference type="BioMuta" id="LNP1"/>
<dbReference type="jPOST" id="A1A4G5"/>
<dbReference type="MassIVE" id="A1A4G5"/>
<dbReference type="PaxDb" id="9606-ENSP00000373191"/>
<dbReference type="PeptideAtlas" id="A1A4G5"/>
<dbReference type="ProteomicsDB" id="91"/>
<dbReference type="Antibodypedia" id="46510">
    <property type="antibodies" value="17 antibodies from 11 providers"/>
</dbReference>
<dbReference type="DNASU" id="348801"/>
<dbReference type="Ensembl" id="ENST00000383693.8">
    <property type="protein sequence ID" value="ENSP00000373191.3"/>
    <property type="gene ID" value="ENSG00000206535.8"/>
</dbReference>
<dbReference type="GeneID" id="348801"/>
<dbReference type="KEGG" id="hsa:348801"/>
<dbReference type="MANE-Select" id="ENST00000383693.8">
    <property type="protein sequence ID" value="ENSP00000373191.3"/>
    <property type="RefSeq nucleotide sequence ID" value="NM_001085451.2"/>
    <property type="RefSeq protein sequence ID" value="NP_001078920.1"/>
</dbReference>
<dbReference type="UCSC" id="uc003dtx.5">
    <property type="organism name" value="human"/>
</dbReference>
<dbReference type="AGR" id="HGNC:28014"/>
<dbReference type="CTD" id="348801"/>
<dbReference type="DisGeNET" id="348801"/>
<dbReference type="GeneCards" id="LNP1"/>
<dbReference type="HGNC" id="HGNC:28014">
    <property type="gene designation" value="LNP1"/>
</dbReference>
<dbReference type="HPA" id="ENSG00000206535">
    <property type="expression patterns" value="Tissue enhanced (retina, testis)"/>
</dbReference>
<dbReference type="neXtProt" id="NX_A1A4G5"/>
<dbReference type="OpenTargets" id="ENSG00000206535"/>
<dbReference type="PharmGKB" id="PA142671542"/>
<dbReference type="VEuPathDB" id="HostDB:ENSG00000206535"/>
<dbReference type="eggNOG" id="ENOG502S2J6">
    <property type="taxonomic scope" value="Eukaryota"/>
</dbReference>
<dbReference type="GeneTree" id="ENSGT00390000007797"/>
<dbReference type="HOGENOM" id="CLU_119588_0_0_1"/>
<dbReference type="InParanoid" id="A1A4G5"/>
<dbReference type="OrthoDB" id="8062037at2759"/>
<dbReference type="PAN-GO" id="A1A4G5">
    <property type="GO annotations" value="0 GO annotations based on evolutionary models"/>
</dbReference>
<dbReference type="PhylomeDB" id="A1A4G5"/>
<dbReference type="TreeFam" id="TF342726"/>
<dbReference type="PathwayCommons" id="A1A4G5"/>
<dbReference type="SignaLink" id="A1A4G5"/>
<dbReference type="BioGRID-ORCS" id="348801">
    <property type="hits" value="10 hits in 1148 CRISPR screens"/>
</dbReference>
<dbReference type="GenomeRNAi" id="348801"/>
<dbReference type="Pharos" id="A1A4G5">
    <property type="development level" value="Tdark"/>
</dbReference>
<dbReference type="PRO" id="PR:A1A4G5"/>
<dbReference type="Proteomes" id="UP000005640">
    <property type="component" value="Chromosome 3"/>
</dbReference>
<dbReference type="RNAct" id="A1A4G5">
    <property type="molecule type" value="protein"/>
</dbReference>
<dbReference type="Bgee" id="ENSG00000206535">
    <property type="expression patterns" value="Expressed in cardiac muscle of right atrium and 165 other cell types or tissues"/>
</dbReference>
<dbReference type="ExpressionAtlas" id="A1A4G5">
    <property type="expression patterns" value="baseline and differential"/>
</dbReference>
<dbReference type="InterPro" id="IPR029280">
    <property type="entry name" value="LNP1"/>
</dbReference>
<dbReference type="PANTHER" id="PTHR35667">
    <property type="entry name" value="LEUKEMIA NUP98 FUSION PARTNER 1"/>
    <property type="match status" value="1"/>
</dbReference>
<dbReference type="PANTHER" id="PTHR35667:SF1">
    <property type="entry name" value="LEUKEMIA NUP98 FUSION PARTNER 1"/>
    <property type="match status" value="1"/>
</dbReference>
<dbReference type="Pfam" id="PF15419">
    <property type="entry name" value="LNP1"/>
    <property type="match status" value="1"/>
</dbReference>
<keyword id="KW-0160">Chromosomal rearrangement</keyword>
<keyword id="KW-1267">Proteomics identification</keyword>
<keyword id="KW-1185">Reference proteome</keyword>
<protein>
    <recommendedName>
        <fullName>Leukemia NUP98 fusion partner 1</fullName>
    </recommendedName>
</protein>
<proteinExistence type="evidence at protein level"/>
<accession>A1A4G5</accession>
<accession>B7ZLT3</accession>
<gene>
    <name type="primary">LNP1</name>
    <name type="synonym">NP3</name>
</gene>
<reference key="1">
    <citation type="journal article" date="2004" name="Genome Res.">
        <title>The status, quality, and expansion of the NIH full-length cDNA project: the Mammalian Gene Collection (MGC).</title>
        <authorList>
            <consortium name="The MGC Project Team"/>
        </authorList>
    </citation>
    <scope>NUCLEOTIDE SEQUENCE [LARGE SCALE MRNA]</scope>
</reference>
<reference key="2">
    <citation type="journal article" date="2006" name="Leukemia">
        <title>NUP98 rearrangements in hematopoietic malignancies: a study of the Groupe Francophone de Cytogenetique Hematologique.</title>
        <authorList>
            <person name="Romana S.P."/>
            <person name="Radford-Weiss I."/>
            <person name="Ben Abdelali R."/>
            <person name="Schluth C."/>
            <person name="Petit A."/>
            <person name="Dastugue N."/>
            <person name="Talmant P."/>
            <person name="Bilhou-Nabera C."/>
            <person name="Mugneret F."/>
            <person name="Lafage-Pochitaloff M."/>
            <person name="Mozziconacci M.-J."/>
            <person name="Andrieu J."/>
            <person name="Lai J.-L."/>
            <person name="Terre C."/>
            <person name="Rack K."/>
            <person name="Cornillet-Lefebvre P."/>
            <person name="Luquet I."/>
            <person name="Nadal N."/>
            <person name="Nguyen-Khac F."/>
            <person name="Perot C."/>
            <person name="Van den Akker J."/>
            <person name="Fert-Ferrer S."/>
            <person name="Cabrol C."/>
            <person name="Charrin C."/>
            <person name="Tigaud I."/>
            <person name="Poirel H."/>
            <person name="Vekemans M."/>
            <person name="Bernard O.A."/>
            <person name="Berger R."/>
        </authorList>
    </citation>
    <scope>CHROMOSOMAL TRANSLOCATION WITH NUP98</scope>
</reference>